<accession>Q4QN50</accession>
<sequence length="175" mass="18989">MTTIVSVRRNGQVVVGGDGQVSLGNTVMKGNARKVRRLYNGKVLAGFAGGTADAFTLFELFERKLEMHQGHLLKSAVELAKDWRTDRALRKLEAMLIVADEKESLIITGIGDVVQPEEDQILAIGSGGNYALSAARALVENTELSAREIVEKSLKIAGDVCVFTNTNFTIEELPN</sequence>
<proteinExistence type="inferred from homology"/>
<dbReference type="EC" id="3.4.25.2" evidence="1"/>
<dbReference type="EMBL" id="CP000057">
    <property type="protein sequence ID" value="AAX87547.1"/>
    <property type="molecule type" value="Genomic_DNA"/>
</dbReference>
<dbReference type="RefSeq" id="WP_011272086.1">
    <property type="nucleotide sequence ID" value="NC_007146.2"/>
</dbReference>
<dbReference type="SMR" id="Q4QN50"/>
<dbReference type="MEROPS" id="T01.006"/>
<dbReference type="GeneID" id="93219507"/>
<dbReference type="KEGG" id="hit:NTHI0624"/>
<dbReference type="HOGENOM" id="CLU_093872_1_0_6"/>
<dbReference type="Proteomes" id="UP000002525">
    <property type="component" value="Chromosome"/>
</dbReference>
<dbReference type="GO" id="GO:0009376">
    <property type="term" value="C:HslUV protease complex"/>
    <property type="evidence" value="ECO:0007669"/>
    <property type="project" value="UniProtKB-UniRule"/>
</dbReference>
<dbReference type="GO" id="GO:0005839">
    <property type="term" value="C:proteasome core complex"/>
    <property type="evidence" value="ECO:0007669"/>
    <property type="project" value="InterPro"/>
</dbReference>
<dbReference type="GO" id="GO:0046872">
    <property type="term" value="F:metal ion binding"/>
    <property type="evidence" value="ECO:0007669"/>
    <property type="project" value="UniProtKB-KW"/>
</dbReference>
<dbReference type="GO" id="GO:0004298">
    <property type="term" value="F:threonine-type endopeptidase activity"/>
    <property type="evidence" value="ECO:0007669"/>
    <property type="project" value="UniProtKB-KW"/>
</dbReference>
<dbReference type="GO" id="GO:0051603">
    <property type="term" value="P:proteolysis involved in protein catabolic process"/>
    <property type="evidence" value="ECO:0007669"/>
    <property type="project" value="InterPro"/>
</dbReference>
<dbReference type="CDD" id="cd01913">
    <property type="entry name" value="protease_HslV"/>
    <property type="match status" value="1"/>
</dbReference>
<dbReference type="FunFam" id="3.60.20.10:FF:000002">
    <property type="entry name" value="ATP-dependent protease subunit HslV"/>
    <property type="match status" value="1"/>
</dbReference>
<dbReference type="Gene3D" id="3.60.20.10">
    <property type="entry name" value="Glutamine Phosphoribosylpyrophosphate, subunit 1, domain 1"/>
    <property type="match status" value="1"/>
</dbReference>
<dbReference type="HAMAP" id="MF_00248">
    <property type="entry name" value="HslV"/>
    <property type="match status" value="1"/>
</dbReference>
<dbReference type="InterPro" id="IPR022281">
    <property type="entry name" value="ATP-dep_Prtase_HsIV_su"/>
</dbReference>
<dbReference type="InterPro" id="IPR029055">
    <property type="entry name" value="Ntn_hydrolases_N"/>
</dbReference>
<dbReference type="InterPro" id="IPR001353">
    <property type="entry name" value="Proteasome_sua/b"/>
</dbReference>
<dbReference type="InterPro" id="IPR023333">
    <property type="entry name" value="Proteasome_suB-type"/>
</dbReference>
<dbReference type="NCBIfam" id="TIGR03692">
    <property type="entry name" value="ATP_dep_HslV"/>
    <property type="match status" value="1"/>
</dbReference>
<dbReference type="NCBIfam" id="NF003964">
    <property type="entry name" value="PRK05456.1"/>
    <property type="match status" value="1"/>
</dbReference>
<dbReference type="PANTHER" id="PTHR32194:SF0">
    <property type="entry name" value="ATP-DEPENDENT PROTEASE SUBUNIT HSLV"/>
    <property type="match status" value="1"/>
</dbReference>
<dbReference type="PANTHER" id="PTHR32194">
    <property type="entry name" value="METALLOPROTEASE TLDD"/>
    <property type="match status" value="1"/>
</dbReference>
<dbReference type="Pfam" id="PF00227">
    <property type="entry name" value="Proteasome"/>
    <property type="match status" value="1"/>
</dbReference>
<dbReference type="PIRSF" id="PIRSF039093">
    <property type="entry name" value="HslV"/>
    <property type="match status" value="1"/>
</dbReference>
<dbReference type="SUPFAM" id="SSF56235">
    <property type="entry name" value="N-terminal nucleophile aminohydrolases (Ntn hydrolases)"/>
    <property type="match status" value="1"/>
</dbReference>
<dbReference type="PROSITE" id="PS51476">
    <property type="entry name" value="PROTEASOME_BETA_2"/>
    <property type="match status" value="1"/>
</dbReference>
<gene>
    <name evidence="1" type="primary">hslV</name>
    <name type="ordered locus">NTHI0624</name>
</gene>
<comment type="function">
    <text evidence="1">Protease subunit of a proteasome-like degradation complex believed to be a general protein degrading machinery.</text>
</comment>
<comment type="catalytic activity">
    <reaction evidence="1">
        <text>ATP-dependent cleavage of peptide bonds with broad specificity.</text>
        <dbReference type="EC" id="3.4.25.2"/>
    </reaction>
</comment>
<comment type="activity regulation">
    <text evidence="1">Allosterically activated by HslU binding.</text>
</comment>
<comment type="subunit">
    <text evidence="1">A double ring-shaped homohexamer of HslV is capped on each side by a ring-shaped HslU homohexamer. The assembly of the HslU/HslV complex is dependent on binding of ATP.</text>
</comment>
<comment type="subcellular location">
    <subcellularLocation>
        <location evidence="1">Cytoplasm</location>
    </subcellularLocation>
</comment>
<comment type="similarity">
    <text evidence="1">Belongs to the peptidase T1B family. HslV subfamily.</text>
</comment>
<keyword id="KW-0021">Allosteric enzyme</keyword>
<keyword id="KW-0963">Cytoplasm</keyword>
<keyword id="KW-0378">Hydrolase</keyword>
<keyword id="KW-0479">Metal-binding</keyword>
<keyword id="KW-0645">Protease</keyword>
<keyword id="KW-0915">Sodium</keyword>
<keyword id="KW-0888">Threonine protease</keyword>
<feature type="chain" id="PRO_1000012614" description="ATP-dependent protease subunit HslV">
    <location>
        <begin position="1"/>
        <end position="175"/>
    </location>
</feature>
<feature type="active site" evidence="1">
    <location>
        <position position="2"/>
    </location>
</feature>
<feature type="binding site" evidence="1">
    <location>
        <position position="158"/>
    </location>
    <ligand>
        <name>Na(+)</name>
        <dbReference type="ChEBI" id="CHEBI:29101"/>
    </ligand>
</feature>
<feature type="binding site" evidence="1">
    <location>
        <position position="161"/>
    </location>
    <ligand>
        <name>Na(+)</name>
        <dbReference type="ChEBI" id="CHEBI:29101"/>
    </ligand>
</feature>
<feature type="binding site" evidence="1">
    <location>
        <position position="164"/>
    </location>
    <ligand>
        <name>Na(+)</name>
        <dbReference type="ChEBI" id="CHEBI:29101"/>
    </ligand>
</feature>
<evidence type="ECO:0000255" key="1">
    <source>
        <dbReference type="HAMAP-Rule" id="MF_00248"/>
    </source>
</evidence>
<reference key="1">
    <citation type="journal article" date="2005" name="J. Bacteriol.">
        <title>Genomic sequence of an otitis media isolate of nontypeable Haemophilus influenzae: comparative study with H. influenzae serotype d, strain KW20.</title>
        <authorList>
            <person name="Harrison A."/>
            <person name="Dyer D.W."/>
            <person name="Gillaspy A."/>
            <person name="Ray W.C."/>
            <person name="Mungur R."/>
            <person name="Carson M.B."/>
            <person name="Zhong H."/>
            <person name="Gipson J."/>
            <person name="Gipson M."/>
            <person name="Johnson L.S."/>
            <person name="Lewis L."/>
            <person name="Bakaletz L.O."/>
            <person name="Munson R.S. Jr."/>
        </authorList>
    </citation>
    <scope>NUCLEOTIDE SEQUENCE [LARGE SCALE GENOMIC DNA]</scope>
    <source>
        <strain>86-028NP</strain>
    </source>
</reference>
<name>HSLV_HAEI8</name>
<organism>
    <name type="scientific">Haemophilus influenzae (strain 86-028NP)</name>
    <dbReference type="NCBI Taxonomy" id="281310"/>
    <lineage>
        <taxon>Bacteria</taxon>
        <taxon>Pseudomonadati</taxon>
        <taxon>Pseudomonadota</taxon>
        <taxon>Gammaproteobacteria</taxon>
        <taxon>Pasteurellales</taxon>
        <taxon>Pasteurellaceae</taxon>
        <taxon>Haemophilus</taxon>
    </lineage>
</organism>
<protein>
    <recommendedName>
        <fullName evidence="1">ATP-dependent protease subunit HslV</fullName>
        <ecNumber evidence="1">3.4.25.2</ecNumber>
    </recommendedName>
</protein>